<protein>
    <recommendedName>
        <fullName>Vesicle-associated protein 3-1</fullName>
    </recommendedName>
    <alternativeName>
        <fullName>Plant VAP homolog 31</fullName>
        <shortName>AtPVA31</shortName>
    </alternativeName>
    <alternativeName>
        <fullName>VAMP-associated protein 3-1</fullName>
    </alternativeName>
    <component>
        <recommendedName>
            <fullName>Vesicle-associated protein 3-1, N-terminally processed</fullName>
        </recommendedName>
    </component>
</protein>
<gene>
    <name type="primary">PVA31</name>
    <name type="ordered locus">At2g23830</name>
    <name type="ORF">T29E15.3</name>
</gene>
<organism>
    <name type="scientific">Arabidopsis thaliana</name>
    <name type="common">Mouse-ear cress</name>
    <dbReference type="NCBI Taxonomy" id="3702"/>
    <lineage>
        <taxon>Eukaryota</taxon>
        <taxon>Viridiplantae</taxon>
        <taxon>Streptophyta</taxon>
        <taxon>Embryophyta</taxon>
        <taxon>Tracheophyta</taxon>
        <taxon>Spermatophyta</taxon>
        <taxon>Magnoliopsida</taxon>
        <taxon>eudicotyledons</taxon>
        <taxon>Gunneridae</taxon>
        <taxon>Pentapetalae</taxon>
        <taxon>rosids</taxon>
        <taxon>malvids</taxon>
        <taxon>Brassicales</taxon>
        <taxon>Brassicaceae</taxon>
        <taxon>Camelineae</taxon>
        <taxon>Arabidopsis</taxon>
    </lineage>
</organism>
<evidence type="ECO:0000250" key="1"/>
<evidence type="ECO:0000250" key="2">
    <source>
        <dbReference type="UniProtKB" id="B9DHD7"/>
    </source>
</evidence>
<evidence type="ECO:0000250" key="3">
    <source>
        <dbReference type="UniProtKB" id="Q8VZ95"/>
    </source>
</evidence>
<evidence type="ECO:0000255" key="4">
    <source>
        <dbReference type="PROSITE-ProRule" id="PRU00132"/>
    </source>
</evidence>
<evidence type="ECO:0000305" key="5"/>
<reference key="1">
    <citation type="journal article" date="1999" name="Nature">
        <title>Sequence and analysis of chromosome 2 of the plant Arabidopsis thaliana.</title>
        <authorList>
            <person name="Lin X."/>
            <person name="Kaul S."/>
            <person name="Rounsley S.D."/>
            <person name="Shea T.P."/>
            <person name="Benito M.-I."/>
            <person name="Town C.D."/>
            <person name="Fujii C.Y."/>
            <person name="Mason T.M."/>
            <person name="Bowman C.L."/>
            <person name="Barnstead M.E."/>
            <person name="Feldblyum T.V."/>
            <person name="Buell C.R."/>
            <person name="Ketchum K.A."/>
            <person name="Lee J.J."/>
            <person name="Ronning C.M."/>
            <person name="Koo H.L."/>
            <person name="Moffat K.S."/>
            <person name="Cronin L.A."/>
            <person name="Shen M."/>
            <person name="Pai G."/>
            <person name="Van Aken S."/>
            <person name="Umayam L."/>
            <person name="Tallon L.J."/>
            <person name="Gill J.E."/>
            <person name="Adams M.D."/>
            <person name="Carrera A.J."/>
            <person name="Creasy T.H."/>
            <person name="Goodman H.M."/>
            <person name="Somerville C.R."/>
            <person name="Copenhaver G.P."/>
            <person name="Preuss D."/>
            <person name="Nierman W.C."/>
            <person name="White O."/>
            <person name="Eisen J.A."/>
            <person name="Salzberg S.L."/>
            <person name="Fraser C.M."/>
            <person name="Venter J.C."/>
        </authorList>
    </citation>
    <scope>NUCLEOTIDE SEQUENCE [LARGE SCALE GENOMIC DNA]</scope>
    <source>
        <strain>cv. Columbia</strain>
    </source>
</reference>
<reference key="2">
    <citation type="journal article" date="2017" name="Plant J.">
        <title>Araport11: a complete reannotation of the Arabidopsis thaliana reference genome.</title>
        <authorList>
            <person name="Cheng C.Y."/>
            <person name="Krishnakumar V."/>
            <person name="Chan A.P."/>
            <person name="Thibaud-Nissen F."/>
            <person name="Schobel S."/>
            <person name="Town C.D."/>
        </authorList>
    </citation>
    <scope>GENOME REANNOTATION</scope>
    <source>
        <strain>cv. Columbia</strain>
    </source>
</reference>
<proteinExistence type="inferred from homology"/>
<keyword id="KW-0007">Acetylation</keyword>
<keyword id="KW-1185">Reference proteome</keyword>
<feature type="chain" id="PRO_0000425788" description="Vesicle-associated protein 3-1">
    <location>
        <begin position="1"/>
        <end position="149"/>
    </location>
</feature>
<feature type="initiator methionine" description="Removed; alternate" evidence="3">
    <location>
        <position position="1"/>
    </location>
</feature>
<feature type="chain" id="PRO_0000402175" description="Vesicle-associated protein 3-1, N-terminally processed">
    <location>
        <begin position="2"/>
        <end position="149"/>
    </location>
</feature>
<feature type="domain" description="MSP" evidence="4">
    <location>
        <begin position="6"/>
        <end position="126"/>
    </location>
</feature>
<feature type="modified residue" description="N-acetylmethionine" evidence="2">
    <location>
        <position position="1"/>
    </location>
</feature>
<feature type="modified residue" description="N-acetylserine; in Vesicle-associated protein 3-1, N-terminally processed" evidence="3">
    <location>
        <position position="2"/>
    </location>
</feature>
<accession>O82213</accession>
<comment type="function">
    <text evidence="1">May play a role in vesicle trafficking.</text>
</comment>
<comment type="similarity">
    <text evidence="5">Belongs to the VAMP-associated protein (VAP) (TC 9.B.17) family.</text>
</comment>
<name>VAP31_ARATH</name>
<dbReference type="EMBL" id="AC005170">
    <property type="protein sequence ID" value="AAC63657.1"/>
    <property type="molecule type" value="Genomic_DNA"/>
</dbReference>
<dbReference type="EMBL" id="CP002685">
    <property type="protein sequence ID" value="AEC07496.1"/>
    <property type="molecule type" value="Genomic_DNA"/>
</dbReference>
<dbReference type="PIR" id="E84629">
    <property type="entry name" value="E84629"/>
</dbReference>
<dbReference type="RefSeq" id="NP_179963.1">
    <property type="nucleotide sequence ID" value="NM_127946.2"/>
</dbReference>
<dbReference type="SMR" id="O82213"/>
<dbReference type="BioGRID" id="2267">
    <property type="interactions" value="3"/>
</dbReference>
<dbReference type="FunCoup" id="O82213">
    <property type="interactions" value="1802"/>
</dbReference>
<dbReference type="STRING" id="3702.O82213"/>
<dbReference type="iPTMnet" id="O82213"/>
<dbReference type="PaxDb" id="3702-AT2G23830.1"/>
<dbReference type="EnsemblPlants" id="AT2G23830.1">
    <property type="protein sequence ID" value="AT2G23830.1"/>
    <property type="gene ID" value="AT2G23830"/>
</dbReference>
<dbReference type="GeneID" id="816915"/>
<dbReference type="Gramene" id="AT2G23830.1">
    <property type="protein sequence ID" value="AT2G23830.1"/>
    <property type="gene ID" value="AT2G23830"/>
</dbReference>
<dbReference type="KEGG" id="ath:AT2G23830"/>
<dbReference type="Araport" id="AT2G23830"/>
<dbReference type="TAIR" id="AT2G23830">
    <property type="gene designation" value="PVA31"/>
</dbReference>
<dbReference type="eggNOG" id="KOG0439">
    <property type="taxonomic scope" value="Eukaryota"/>
</dbReference>
<dbReference type="HOGENOM" id="CLU_036554_3_2_1"/>
<dbReference type="InParanoid" id="O82213"/>
<dbReference type="OMA" id="GNVIANW"/>
<dbReference type="PhylomeDB" id="O82213"/>
<dbReference type="PRO" id="PR:O82213"/>
<dbReference type="Proteomes" id="UP000006548">
    <property type="component" value="Chromosome 2"/>
</dbReference>
<dbReference type="ExpressionAtlas" id="O82213">
    <property type="expression patterns" value="baseline and differential"/>
</dbReference>
<dbReference type="GO" id="GO:0005789">
    <property type="term" value="C:endoplasmic reticulum membrane"/>
    <property type="evidence" value="ECO:0007669"/>
    <property type="project" value="InterPro"/>
</dbReference>
<dbReference type="FunFam" id="2.60.40.10:FF:000813">
    <property type="entry name" value="Vesicle-associated protein 1-1"/>
    <property type="match status" value="1"/>
</dbReference>
<dbReference type="Gene3D" id="2.60.40.10">
    <property type="entry name" value="Immunoglobulins"/>
    <property type="match status" value="1"/>
</dbReference>
<dbReference type="InterPro" id="IPR013783">
    <property type="entry name" value="Ig-like_fold"/>
</dbReference>
<dbReference type="InterPro" id="IPR000535">
    <property type="entry name" value="MSP_dom"/>
</dbReference>
<dbReference type="InterPro" id="IPR008962">
    <property type="entry name" value="PapD-like_sf"/>
</dbReference>
<dbReference type="InterPro" id="IPR016763">
    <property type="entry name" value="VAP"/>
</dbReference>
<dbReference type="PANTHER" id="PTHR10809">
    <property type="entry name" value="VESICLE-ASSOCIATED MEMBRANE PROTEIN-ASSOCIATED PROTEIN"/>
    <property type="match status" value="1"/>
</dbReference>
<dbReference type="PANTHER" id="PTHR10809:SF117">
    <property type="entry name" value="VESICLE-ASSOCIATED PROTEIN 1-1-RELATED"/>
    <property type="match status" value="1"/>
</dbReference>
<dbReference type="Pfam" id="PF00635">
    <property type="entry name" value="Motile_Sperm"/>
    <property type="match status" value="1"/>
</dbReference>
<dbReference type="PIRSF" id="PIRSF019693">
    <property type="entry name" value="VAMP-associated"/>
    <property type="match status" value="1"/>
</dbReference>
<dbReference type="SUPFAM" id="SSF49354">
    <property type="entry name" value="PapD-like"/>
    <property type="match status" value="1"/>
</dbReference>
<dbReference type="PROSITE" id="PS50202">
    <property type="entry name" value="MSP"/>
    <property type="match status" value="1"/>
</dbReference>
<sequence>MSNNELLEIEPMYLQFPFELKKQMSCSLYLTNKTDNNVAFKVKTTNRNNYCVRPNYGLILPKSTCKVLVTMQAQKEVPSDMQSFEKFMIQSVLASPGVTAKEVTREMFSKESGHVVEETKLRVTYVCSTTTNITSSPRTRRGFIFQCFC</sequence>